<feature type="chain" id="PRO_0000356664" description="Large ribosomal subunit protein bL33">
    <location>
        <begin position="1"/>
        <end position="57"/>
    </location>
</feature>
<keyword id="KW-0687">Ribonucleoprotein</keyword>
<keyword id="KW-0689">Ribosomal protein</keyword>
<evidence type="ECO:0000255" key="1">
    <source>
        <dbReference type="HAMAP-Rule" id="MF_00294"/>
    </source>
</evidence>
<evidence type="ECO:0000305" key="2"/>
<comment type="similarity">
    <text evidence="1">Belongs to the bacterial ribosomal protein bL33 family.</text>
</comment>
<reference key="1">
    <citation type="submission" date="2006-09" db="EMBL/GenBank/DDBJ databases">
        <title>Complete sequence of chromosome 1 of Shewanella sp. ANA-3.</title>
        <authorList>
            <person name="Copeland A."/>
            <person name="Lucas S."/>
            <person name="Lapidus A."/>
            <person name="Barry K."/>
            <person name="Detter J.C."/>
            <person name="Glavina del Rio T."/>
            <person name="Hammon N."/>
            <person name="Israni S."/>
            <person name="Dalin E."/>
            <person name="Tice H."/>
            <person name="Pitluck S."/>
            <person name="Chertkov O."/>
            <person name="Brettin T."/>
            <person name="Bruce D."/>
            <person name="Han C."/>
            <person name="Tapia R."/>
            <person name="Gilna P."/>
            <person name="Schmutz J."/>
            <person name="Larimer F."/>
            <person name="Land M."/>
            <person name="Hauser L."/>
            <person name="Kyrpides N."/>
            <person name="Kim E."/>
            <person name="Newman D."/>
            <person name="Salticov C."/>
            <person name="Konstantinidis K."/>
            <person name="Klappenback J."/>
            <person name="Tiedje J."/>
            <person name="Richardson P."/>
        </authorList>
    </citation>
    <scope>NUCLEOTIDE SEQUENCE [LARGE SCALE GENOMIC DNA]</scope>
    <source>
        <strain>ANA-3</strain>
    </source>
</reference>
<organism>
    <name type="scientific">Shewanella sp. (strain ANA-3)</name>
    <dbReference type="NCBI Taxonomy" id="94122"/>
    <lineage>
        <taxon>Bacteria</taxon>
        <taxon>Pseudomonadati</taxon>
        <taxon>Pseudomonadota</taxon>
        <taxon>Gammaproteobacteria</taxon>
        <taxon>Alteromonadales</taxon>
        <taxon>Shewanellaceae</taxon>
        <taxon>Shewanella</taxon>
    </lineage>
</organism>
<dbReference type="EMBL" id="CP000469">
    <property type="protein sequence ID" value="ABK49986.1"/>
    <property type="molecule type" value="Genomic_DNA"/>
</dbReference>
<dbReference type="RefSeq" id="WP_006079871.1">
    <property type="nucleotide sequence ID" value="NC_008577.1"/>
</dbReference>
<dbReference type="SMR" id="A0L1R7"/>
<dbReference type="STRING" id="94122.Shewana3_3768"/>
<dbReference type="GeneID" id="94729699"/>
<dbReference type="KEGG" id="shn:Shewana3_3768"/>
<dbReference type="eggNOG" id="COG0267">
    <property type="taxonomic scope" value="Bacteria"/>
</dbReference>
<dbReference type="HOGENOM" id="CLU_190949_1_1_6"/>
<dbReference type="OrthoDB" id="21586at2"/>
<dbReference type="Proteomes" id="UP000002589">
    <property type="component" value="Chromosome"/>
</dbReference>
<dbReference type="GO" id="GO:0022625">
    <property type="term" value="C:cytosolic large ribosomal subunit"/>
    <property type="evidence" value="ECO:0007669"/>
    <property type="project" value="TreeGrafter"/>
</dbReference>
<dbReference type="GO" id="GO:0003735">
    <property type="term" value="F:structural constituent of ribosome"/>
    <property type="evidence" value="ECO:0007669"/>
    <property type="project" value="InterPro"/>
</dbReference>
<dbReference type="GO" id="GO:0006412">
    <property type="term" value="P:translation"/>
    <property type="evidence" value="ECO:0007669"/>
    <property type="project" value="UniProtKB-UniRule"/>
</dbReference>
<dbReference type="FunFam" id="2.20.28.120:FF:000001">
    <property type="entry name" value="50S ribosomal protein L33"/>
    <property type="match status" value="1"/>
</dbReference>
<dbReference type="Gene3D" id="2.20.28.120">
    <property type="entry name" value="Ribosomal protein L33"/>
    <property type="match status" value="1"/>
</dbReference>
<dbReference type="HAMAP" id="MF_00294">
    <property type="entry name" value="Ribosomal_bL33"/>
    <property type="match status" value="1"/>
</dbReference>
<dbReference type="InterPro" id="IPR001705">
    <property type="entry name" value="Ribosomal_bL33"/>
</dbReference>
<dbReference type="InterPro" id="IPR018264">
    <property type="entry name" value="Ribosomal_bL33_CS"/>
</dbReference>
<dbReference type="InterPro" id="IPR038584">
    <property type="entry name" value="Ribosomal_bL33_sf"/>
</dbReference>
<dbReference type="InterPro" id="IPR011332">
    <property type="entry name" value="Ribosomal_zn-bd"/>
</dbReference>
<dbReference type="NCBIfam" id="NF001860">
    <property type="entry name" value="PRK00595.1"/>
    <property type="match status" value="1"/>
</dbReference>
<dbReference type="NCBIfam" id="TIGR01023">
    <property type="entry name" value="rpmG_bact"/>
    <property type="match status" value="1"/>
</dbReference>
<dbReference type="PANTHER" id="PTHR15238">
    <property type="entry name" value="54S RIBOSOMAL PROTEIN L39, MITOCHONDRIAL"/>
    <property type="match status" value="1"/>
</dbReference>
<dbReference type="PANTHER" id="PTHR15238:SF1">
    <property type="entry name" value="LARGE RIBOSOMAL SUBUNIT PROTEIN BL33M"/>
    <property type="match status" value="1"/>
</dbReference>
<dbReference type="Pfam" id="PF00471">
    <property type="entry name" value="Ribosomal_L33"/>
    <property type="match status" value="1"/>
</dbReference>
<dbReference type="SUPFAM" id="SSF57829">
    <property type="entry name" value="Zn-binding ribosomal proteins"/>
    <property type="match status" value="1"/>
</dbReference>
<dbReference type="PROSITE" id="PS00582">
    <property type="entry name" value="RIBOSOMAL_L33"/>
    <property type="match status" value="1"/>
</dbReference>
<accession>A0L1R7</accession>
<protein>
    <recommendedName>
        <fullName evidence="1">Large ribosomal subunit protein bL33</fullName>
    </recommendedName>
    <alternativeName>
        <fullName evidence="2">50S ribosomal protein L33</fullName>
    </alternativeName>
</protein>
<name>RL33_SHESA</name>
<sequence length="57" mass="6733">MAKAKGNREKIKLVSTAKTGHFYTTEKNKRNMPEKMEIKKFDPVIRQHVIYKEAKIK</sequence>
<gene>
    <name evidence="1" type="primary">rpmG</name>
    <name type="ordered locus">Shewana3_3768</name>
</gene>
<proteinExistence type="inferred from homology"/>